<feature type="signal peptide" evidence="2">
    <location>
        <begin position="1"/>
        <end position="19"/>
    </location>
</feature>
<feature type="chain" id="PRO_0000403809" description="Neurotoxin LmNaTx19">
    <location>
        <begin position="20"/>
        <end position="90"/>
    </location>
</feature>
<feature type="domain" description="LCN-type CS-alpha/beta" evidence="3">
    <location>
        <begin position="21"/>
        <end position="80"/>
    </location>
</feature>
<feature type="disulfide bond" evidence="3">
    <location>
        <begin position="31"/>
        <end position="79"/>
    </location>
</feature>
<feature type="disulfide bond" evidence="3">
    <location>
        <begin position="35"/>
        <end position="55"/>
    </location>
</feature>
<feature type="disulfide bond" evidence="3">
    <location>
        <begin position="41"/>
        <end position="62"/>
    </location>
</feature>
<feature type="disulfide bond" evidence="3">
    <location>
        <begin position="45"/>
        <end position="64"/>
    </location>
</feature>
<dbReference type="EMBL" id="GT029188">
    <property type="status" value="NOT_ANNOTATED_CDS"/>
    <property type="molecule type" value="mRNA"/>
</dbReference>
<dbReference type="SMR" id="P0CI51"/>
<dbReference type="GO" id="GO:0005576">
    <property type="term" value="C:extracellular region"/>
    <property type="evidence" value="ECO:0007669"/>
    <property type="project" value="UniProtKB-SubCell"/>
</dbReference>
<dbReference type="GO" id="GO:0019871">
    <property type="term" value="F:sodium channel inhibitor activity"/>
    <property type="evidence" value="ECO:0007669"/>
    <property type="project" value="InterPro"/>
</dbReference>
<dbReference type="GO" id="GO:0090729">
    <property type="term" value="F:toxin activity"/>
    <property type="evidence" value="ECO:0007669"/>
    <property type="project" value="UniProtKB-KW"/>
</dbReference>
<dbReference type="GO" id="GO:0006952">
    <property type="term" value="P:defense response"/>
    <property type="evidence" value="ECO:0007669"/>
    <property type="project" value="InterPro"/>
</dbReference>
<dbReference type="CDD" id="cd23106">
    <property type="entry name" value="neurotoxins_LC_scorpion"/>
    <property type="match status" value="1"/>
</dbReference>
<dbReference type="Gene3D" id="3.30.30.10">
    <property type="entry name" value="Knottin, scorpion toxin-like"/>
    <property type="match status" value="1"/>
</dbReference>
<dbReference type="InterPro" id="IPR044062">
    <property type="entry name" value="LCN-type_CS_alpha_beta_dom"/>
</dbReference>
<dbReference type="InterPro" id="IPR003614">
    <property type="entry name" value="Scorpion_toxin-like"/>
</dbReference>
<dbReference type="InterPro" id="IPR036574">
    <property type="entry name" value="Scorpion_toxin-like_sf"/>
</dbReference>
<dbReference type="InterPro" id="IPR018218">
    <property type="entry name" value="Scorpion_toxinL"/>
</dbReference>
<dbReference type="InterPro" id="IPR002061">
    <property type="entry name" value="Scorpion_toxinL/defensin"/>
</dbReference>
<dbReference type="Pfam" id="PF00537">
    <property type="entry name" value="Toxin_3"/>
    <property type="match status" value="1"/>
</dbReference>
<dbReference type="PRINTS" id="PR00285">
    <property type="entry name" value="SCORPNTOXIN"/>
</dbReference>
<dbReference type="SMART" id="SM00505">
    <property type="entry name" value="Knot1"/>
    <property type="match status" value="1"/>
</dbReference>
<dbReference type="SUPFAM" id="SSF57095">
    <property type="entry name" value="Scorpion toxin-like"/>
    <property type="match status" value="1"/>
</dbReference>
<dbReference type="PROSITE" id="PS51863">
    <property type="entry name" value="LCN_CSAB"/>
    <property type="match status" value="1"/>
</dbReference>
<organism>
    <name type="scientific">Lychas mucronatus</name>
    <name type="common">Chinese swimming scorpion</name>
    <dbReference type="NCBI Taxonomy" id="172552"/>
    <lineage>
        <taxon>Eukaryota</taxon>
        <taxon>Metazoa</taxon>
        <taxon>Ecdysozoa</taxon>
        <taxon>Arthropoda</taxon>
        <taxon>Chelicerata</taxon>
        <taxon>Arachnida</taxon>
        <taxon>Scorpiones</taxon>
        <taxon>Buthida</taxon>
        <taxon>Buthoidea</taxon>
        <taxon>Buthidae</taxon>
        <taxon>Lychas</taxon>
    </lineage>
</organism>
<evidence type="ECO:0000250" key="1"/>
<evidence type="ECO:0000255" key="2"/>
<evidence type="ECO:0000255" key="3">
    <source>
        <dbReference type="PROSITE-ProRule" id="PRU01210"/>
    </source>
</evidence>
<evidence type="ECO:0000305" key="4"/>
<sequence>MNHLILIVAMCLMVIGVQCLKDGYLYDDVDCKFSCWDNEYCRKLCKSKKAVGGYCWRWRFSCYCTGLPDNEKTEGTYKCGQGRFLMGKDK</sequence>
<proteinExistence type="evidence at transcript level"/>
<accession>P0CI51</accession>
<comment type="function">
    <text evidence="1">Binds voltage-independently at site-3 of voltage-gated sodium channels (Nav) and inhibits the inactivation of the activated channels, thereby blocking neuronal transmission.</text>
</comment>
<comment type="subcellular location">
    <subcellularLocation>
        <location evidence="1">Secreted</location>
    </subcellularLocation>
</comment>
<comment type="tissue specificity">
    <text>Expressed by the venom gland.</text>
</comment>
<comment type="domain">
    <text evidence="4">Has the structural arrangement of an alpha-helix connected to antiparallel beta-sheets by disulfide bonds (CS-alpha/beta).</text>
</comment>
<comment type="similarity">
    <text evidence="4">Belongs to the long (4 C-C) scorpion toxin superfamily. Sodium channel inhibitor family. Alpha subfamily.</text>
</comment>
<protein>
    <recommendedName>
        <fullName>Neurotoxin LmNaTx19</fullName>
    </recommendedName>
</protein>
<name>SNAJ_LYCMC</name>
<keyword id="KW-1015">Disulfide bond</keyword>
<keyword id="KW-0872">Ion channel impairing toxin</keyword>
<keyword id="KW-0528">Neurotoxin</keyword>
<keyword id="KW-0964">Secreted</keyword>
<keyword id="KW-0732">Signal</keyword>
<keyword id="KW-0800">Toxin</keyword>
<keyword id="KW-0738">Voltage-gated sodium channel impairing toxin</keyword>
<reference key="1">
    <citation type="journal article" date="2010" name="BMC Genomics">
        <title>Comparative venom gland transcriptome analysis of the scorpion Lychas mucronatus reveals intraspecific toxic gene diversity and new venomous components.</title>
        <authorList>
            <person name="Zhao R."/>
            <person name="Ma Y."/>
            <person name="He Y."/>
            <person name="Di Z."/>
            <person name="Wu Y.-L."/>
            <person name="Cao Z.-J."/>
            <person name="Li W.-X."/>
        </authorList>
    </citation>
    <scope>NUCLEOTIDE SEQUENCE [MRNA]</scope>
    <source>
        <strain>Yunnan</strain>
        <tissue>Venom gland</tissue>
    </source>
</reference>